<reference key="1">
    <citation type="journal article" date="1997" name="Oncogene">
        <title>Identification and characterization of R-ras3: a novel member of the RAS gene family with a non-ubiquitous pattern of tissue distribution.</title>
        <authorList>
            <person name="Kimmelman A."/>
            <person name="Tolkacheva T."/>
            <person name="Lorenzi M.V."/>
            <person name="Osada M."/>
            <person name="Chan A.M.-L."/>
        </authorList>
    </citation>
    <scope>NUCLEOTIDE SEQUENCE [MRNA] (ISOFORM 1)</scope>
    <source>
        <tissue>Lung</tissue>
    </source>
</reference>
<reference key="2">
    <citation type="journal article" date="1999" name="Blood">
        <title>Interleukin-9-induced expression of M-Ras/R-Ras3 oncogene in T-helper clones.</title>
        <authorList>
            <person name="Louahed J."/>
            <person name="Grasso L."/>
            <person name="De Smet C."/>
            <person name="van Roost E."/>
            <person name="Wildmann C."/>
            <person name="Nicolaides N.C."/>
            <person name="Levitt R.C."/>
            <person name="Renauld J.-C."/>
        </authorList>
    </citation>
    <scope>NUCLEOTIDE SEQUENCE [MRNA] (ISOFORM 1)</scope>
    <source>
        <tissue>Testis</tissue>
    </source>
</reference>
<reference key="3">
    <citation type="submission" date="2002-03" db="EMBL/GenBank/DDBJ databases">
        <title>cDNA clones of human proteins involved in signal transduction sequenced by the Guthrie cDNA resource center (www.cdna.org).</title>
        <authorList>
            <person name="Puhl H.L. III"/>
            <person name="Ikeda S.R."/>
            <person name="Aronstam R.S."/>
        </authorList>
    </citation>
    <scope>NUCLEOTIDE SEQUENCE [LARGE SCALE MRNA] (ISOFORM 1)</scope>
    <source>
        <tissue>Brain</tissue>
    </source>
</reference>
<reference key="4">
    <citation type="journal article" date="2004" name="Nat. Genet.">
        <title>Complete sequencing and characterization of 21,243 full-length human cDNAs.</title>
        <authorList>
            <person name="Ota T."/>
            <person name="Suzuki Y."/>
            <person name="Nishikawa T."/>
            <person name="Otsuki T."/>
            <person name="Sugiyama T."/>
            <person name="Irie R."/>
            <person name="Wakamatsu A."/>
            <person name="Hayashi K."/>
            <person name="Sato H."/>
            <person name="Nagai K."/>
            <person name="Kimura K."/>
            <person name="Makita H."/>
            <person name="Sekine M."/>
            <person name="Obayashi M."/>
            <person name="Nishi T."/>
            <person name="Shibahara T."/>
            <person name="Tanaka T."/>
            <person name="Ishii S."/>
            <person name="Yamamoto J."/>
            <person name="Saito K."/>
            <person name="Kawai Y."/>
            <person name="Isono Y."/>
            <person name="Nakamura Y."/>
            <person name="Nagahari K."/>
            <person name="Murakami K."/>
            <person name="Yasuda T."/>
            <person name="Iwayanagi T."/>
            <person name="Wagatsuma M."/>
            <person name="Shiratori A."/>
            <person name="Sudo H."/>
            <person name="Hosoiri T."/>
            <person name="Kaku Y."/>
            <person name="Kodaira H."/>
            <person name="Kondo H."/>
            <person name="Sugawara M."/>
            <person name="Takahashi M."/>
            <person name="Kanda K."/>
            <person name="Yokoi T."/>
            <person name="Furuya T."/>
            <person name="Kikkawa E."/>
            <person name="Omura Y."/>
            <person name="Abe K."/>
            <person name="Kamihara K."/>
            <person name="Katsuta N."/>
            <person name="Sato K."/>
            <person name="Tanikawa M."/>
            <person name="Yamazaki M."/>
            <person name="Ninomiya K."/>
            <person name="Ishibashi T."/>
            <person name="Yamashita H."/>
            <person name="Murakawa K."/>
            <person name="Fujimori K."/>
            <person name="Tanai H."/>
            <person name="Kimata M."/>
            <person name="Watanabe M."/>
            <person name="Hiraoka S."/>
            <person name="Chiba Y."/>
            <person name="Ishida S."/>
            <person name="Ono Y."/>
            <person name="Takiguchi S."/>
            <person name="Watanabe S."/>
            <person name="Yosida M."/>
            <person name="Hotuta T."/>
            <person name="Kusano J."/>
            <person name="Kanehori K."/>
            <person name="Takahashi-Fujii A."/>
            <person name="Hara H."/>
            <person name="Tanase T.-O."/>
            <person name="Nomura Y."/>
            <person name="Togiya S."/>
            <person name="Komai F."/>
            <person name="Hara R."/>
            <person name="Takeuchi K."/>
            <person name="Arita M."/>
            <person name="Imose N."/>
            <person name="Musashino K."/>
            <person name="Yuuki H."/>
            <person name="Oshima A."/>
            <person name="Sasaki N."/>
            <person name="Aotsuka S."/>
            <person name="Yoshikawa Y."/>
            <person name="Matsunawa H."/>
            <person name="Ichihara T."/>
            <person name="Shiohata N."/>
            <person name="Sano S."/>
            <person name="Moriya S."/>
            <person name="Momiyama H."/>
            <person name="Satoh N."/>
            <person name="Takami S."/>
            <person name="Terashima Y."/>
            <person name="Suzuki O."/>
            <person name="Nakagawa S."/>
            <person name="Senoh A."/>
            <person name="Mizoguchi H."/>
            <person name="Goto Y."/>
            <person name="Shimizu F."/>
            <person name="Wakebe H."/>
            <person name="Hishigaki H."/>
            <person name="Watanabe T."/>
            <person name="Sugiyama A."/>
            <person name="Takemoto M."/>
            <person name="Kawakami B."/>
            <person name="Yamazaki M."/>
            <person name="Watanabe K."/>
            <person name="Kumagai A."/>
            <person name="Itakura S."/>
            <person name="Fukuzumi Y."/>
            <person name="Fujimori Y."/>
            <person name="Komiyama M."/>
            <person name="Tashiro H."/>
            <person name="Tanigami A."/>
            <person name="Fujiwara T."/>
            <person name="Ono T."/>
            <person name="Yamada K."/>
            <person name="Fujii Y."/>
            <person name="Ozaki K."/>
            <person name="Hirao M."/>
            <person name="Ohmori Y."/>
            <person name="Kawabata A."/>
            <person name="Hikiji T."/>
            <person name="Kobatake N."/>
            <person name="Inagaki H."/>
            <person name="Ikema Y."/>
            <person name="Okamoto S."/>
            <person name="Okitani R."/>
            <person name="Kawakami T."/>
            <person name="Noguchi S."/>
            <person name="Itoh T."/>
            <person name="Shigeta K."/>
            <person name="Senba T."/>
            <person name="Matsumura K."/>
            <person name="Nakajima Y."/>
            <person name="Mizuno T."/>
            <person name="Morinaga M."/>
            <person name="Sasaki M."/>
            <person name="Togashi T."/>
            <person name="Oyama M."/>
            <person name="Hata H."/>
            <person name="Watanabe M."/>
            <person name="Komatsu T."/>
            <person name="Mizushima-Sugano J."/>
            <person name="Satoh T."/>
            <person name="Shirai Y."/>
            <person name="Takahashi Y."/>
            <person name="Nakagawa K."/>
            <person name="Okumura K."/>
            <person name="Nagase T."/>
            <person name="Nomura N."/>
            <person name="Kikuchi H."/>
            <person name="Masuho Y."/>
            <person name="Yamashita R."/>
            <person name="Nakai K."/>
            <person name="Yada T."/>
            <person name="Nakamura Y."/>
            <person name="Ohara O."/>
            <person name="Isogai T."/>
            <person name="Sugano S."/>
        </authorList>
    </citation>
    <scope>NUCLEOTIDE SEQUENCE [LARGE SCALE MRNA] (ISOFORM 2)</scope>
    <source>
        <tissue>Hippocampus</tissue>
    </source>
</reference>
<reference key="5">
    <citation type="submission" date="2004-10" db="EMBL/GenBank/DDBJ databases">
        <title>Cloning of human full-length CDSs in BD Creator(TM) system donor vector.</title>
        <authorList>
            <person name="Kalnine N."/>
            <person name="Chen X."/>
            <person name="Rolfs A."/>
            <person name="Halleck A."/>
            <person name="Hines L."/>
            <person name="Eisenstein S."/>
            <person name="Koundinya M."/>
            <person name="Raphael J."/>
            <person name="Moreira D."/>
            <person name="Kelley T."/>
            <person name="LaBaer J."/>
            <person name="Lin Y."/>
            <person name="Phelan M."/>
            <person name="Farmer A."/>
        </authorList>
    </citation>
    <scope>NUCLEOTIDE SEQUENCE [LARGE SCALE MRNA] (ISOFORM 1)</scope>
</reference>
<reference key="6">
    <citation type="journal article" date="2004" name="Genome Res.">
        <title>The status, quality, and expansion of the NIH full-length cDNA project: the Mammalian Gene Collection (MGC).</title>
        <authorList>
            <consortium name="The MGC Project Team"/>
        </authorList>
    </citation>
    <scope>NUCLEOTIDE SEQUENCE [LARGE SCALE MRNA] (ISOFORM 2)</scope>
    <source>
        <tissue>Pancreas</tissue>
        <tissue>Spleen</tissue>
    </source>
</reference>
<reference key="7">
    <citation type="journal article" date="2006" name="Nature">
        <title>The DNA sequence, annotation and analysis of human chromosome 3.</title>
        <authorList>
            <person name="Muzny D.M."/>
            <person name="Scherer S.E."/>
            <person name="Kaul R."/>
            <person name="Wang J."/>
            <person name="Yu J."/>
            <person name="Sudbrak R."/>
            <person name="Buhay C.J."/>
            <person name="Chen R."/>
            <person name="Cree A."/>
            <person name="Ding Y."/>
            <person name="Dugan-Rocha S."/>
            <person name="Gill R."/>
            <person name="Gunaratne P."/>
            <person name="Harris R.A."/>
            <person name="Hawes A.C."/>
            <person name="Hernandez J."/>
            <person name="Hodgson A.V."/>
            <person name="Hume J."/>
            <person name="Jackson A."/>
            <person name="Khan Z.M."/>
            <person name="Kovar-Smith C."/>
            <person name="Lewis L.R."/>
            <person name="Lozado R.J."/>
            <person name="Metzker M.L."/>
            <person name="Milosavljevic A."/>
            <person name="Miner G.R."/>
            <person name="Morgan M.B."/>
            <person name="Nazareth L.V."/>
            <person name="Scott G."/>
            <person name="Sodergren E."/>
            <person name="Song X.-Z."/>
            <person name="Steffen D."/>
            <person name="Wei S."/>
            <person name="Wheeler D.A."/>
            <person name="Wright M.W."/>
            <person name="Worley K.C."/>
            <person name="Yuan Y."/>
            <person name="Zhang Z."/>
            <person name="Adams C.Q."/>
            <person name="Ansari-Lari M.A."/>
            <person name="Ayele M."/>
            <person name="Brown M.J."/>
            <person name="Chen G."/>
            <person name="Chen Z."/>
            <person name="Clendenning J."/>
            <person name="Clerc-Blankenburg K.P."/>
            <person name="Chen R."/>
            <person name="Chen Z."/>
            <person name="Davis C."/>
            <person name="Delgado O."/>
            <person name="Dinh H.H."/>
            <person name="Dong W."/>
            <person name="Draper H."/>
            <person name="Ernst S."/>
            <person name="Fu G."/>
            <person name="Gonzalez-Garay M.L."/>
            <person name="Garcia D.K."/>
            <person name="Gillett W."/>
            <person name="Gu J."/>
            <person name="Hao B."/>
            <person name="Haugen E."/>
            <person name="Havlak P."/>
            <person name="He X."/>
            <person name="Hennig S."/>
            <person name="Hu S."/>
            <person name="Huang W."/>
            <person name="Jackson L.R."/>
            <person name="Jacob L.S."/>
            <person name="Kelly S.H."/>
            <person name="Kube M."/>
            <person name="Levy R."/>
            <person name="Li Z."/>
            <person name="Liu B."/>
            <person name="Liu J."/>
            <person name="Liu W."/>
            <person name="Lu J."/>
            <person name="Maheshwari M."/>
            <person name="Nguyen B.-V."/>
            <person name="Okwuonu G.O."/>
            <person name="Palmeiri A."/>
            <person name="Pasternak S."/>
            <person name="Perez L.M."/>
            <person name="Phelps K.A."/>
            <person name="Plopper F.J."/>
            <person name="Qiang B."/>
            <person name="Raymond C."/>
            <person name="Rodriguez R."/>
            <person name="Saenphimmachak C."/>
            <person name="Santibanez J."/>
            <person name="Shen H."/>
            <person name="Shen Y."/>
            <person name="Subramanian S."/>
            <person name="Tabor P.E."/>
            <person name="Verduzco D."/>
            <person name="Waldron L."/>
            <person name="Wang J."/>
            <person name="Wang J."/>
            <person name="Wang Q."/>
            <person name="Williams G.A."/>
            <person name="Wong G.K.-S."/>
            <person name="Yao Z."/>
            <person name="Zhang J."/>
            <person name="Zhang X."/>
            <person name="Zhao G."/>
            <person name="Zhou J."/>
            <person name="Zhou Y."/>
            <person name="Nelson D."/>
            <person name="Lehrach H."/>
            <person name="Reinhardt R."/>
            <person name="Naylor S.L."/>
            <person name="Yang H."/>
            <person name="Olson M."/>
            <person name="Weinstock G."/>
            <person name="Gibbs R.A."/>
        </authorList>
    </citation>
    <scope>NUCLEOTIDE SEQUENCE [LARGE SCALE GENOMIC DNA]</scope>
</reference>
<reference key="8">
    <citation type="journal article" date="2006" name="Mol. Cell">
        <title>A phosphatase holoenzyme comprised of Shoc2/Sur8 and the catalytic subunit of PP1 functions as an M-Ras effector to modulate Raf activity.</title>
        <authorList>
            <person name="Rodriguez-Viciana P."/>
            <person name="Oses-Prieto J."/>
            <person name="Burlingame A."/>
            <person name="Fried M."/>
            <person name="McCormick F."/>
        </authorList>
    </citation>
    <scope>FUNCTION</scope>
    <scope>INTERACTION WITH MRAS AND RAF1</scope>
    <scope>IDENTIFICATION IN A COMPLEX WITH PP1CA; PPP1CB; PPP1CC; RAF1 AND SHOC2</scope>
</reference>
<reference key="9">
    <citation type="journal article" date="2025" name="Nat. Commun.">
        <title>The small GTPase MRAS is a broken switch.</title>
        <authorList>
            <person name="Bernal Astrain G."/>
            <person name="Strakhova R."/>
            <person name="Jo C.H."/>
            <person name="Teszner E."/>
            <person name="Killoran R.C."/>
            <person name="Smith M.J."/>
        </authorList>
    </citation>
    <scope>FUNCTION</scope>
    <scope>SUBUNIT</scope>
    <scope>MUTAGENESIS OF GLY-22 AND GLN-71</scope>
</reference>
<reference key="10">
    <citation type="journal article" date="2017" name="JCI Insight">
        <title>Elucidation of MRAS-mediated Noonan syndrome with cardiac hypertrophy.</title>
        <authorList>
            <person name="Higgins E.M."/>
            <person name="Bos J.M."/>
            <person name="Mason-Suares H."/>
            <person name="Tester D.J."/>
            <person name="Ackerman J.P."/>
            <person name="MacRae C.A."/>
            <person name="Sol-Church K."/>
            <person name="Gripp K.W."/>
            <person name="Urrutia R."/>
            <person name="Ackerman M.J."/>
        </authorList>
    </citation>
    <scope>INVOLVEMENT IN NS11</scope>
    <scope>VARIANTS NS11 VAL-23 AND ILE-68</scope>
    <scope>CHARACTERIZATION OF VARIANT NS11 VAL-23</scope>
    <scope>FUNCTION</scope>
</reference>
<reference key="11">
    <citation type="journal article" date="2019" name="Am. J. Med. Genet. A">
        <title>Severe Noonan syndrome phenotype associated with a germline Q71R MRAS variant: a recurrent substitution in RAS homologs in various cancers.</title>
        <authorList>
            <person name="Suzuki H."/>
            <person name="Takenouchi T."/>
            <person name="Uehara T."/>
            <person name="Takasago S."/>
            <person name="Ihara S."/>
            <person name="Yoshihashi H."/>
            <person name="Kosaki K."/>
        </authorList>
    </citation>
    <scope>VARIANT NS11 ARG-71</scope>
</reference>
<reference evidence="17" key="12">
    <citation type="journal article" date="2022" name="Nat. Struct. Mol. Biol.">
        <title>Structure of the SHOC2-MRAS-PP1c complex provides insights into RAF activation and Noonan syndrome.</title>
        <authorList>
            <person name="Bonsor D.A."/>
            <person name="Alexander P."/>
            <person name="Snead K."/>
            <person name="Hartig N."/>
            <person name="Drew M."/>
            <person name="Messing S."/>
            <person name="Finci L.I."/>
            <person name="Nissley D.V."/>
            <person name="McCormick F."/>
            <person name="Esposito D."/>
            <person name="Rodriguez-Viciana P."/>
            <person name="Stephen A.G."/>
            <person name="Simanshu D.K."/>
        </authorList>
    </citation>
    <scope>X-RAY CRYSTALLOGRAPHY (2.17 ANGSTROMS) OF 1-178 OF MUTANT LEU-71 IN COMPLEX WITH MG(2+); GTP ANALOG; PPP1CA AND SHOC2</scope>
    <scope>FUNCTION</scope>
    <scope>COFACTOR</scope>
    <scope>INTERACTION WITH PPP1CA; PPP1CB AND SHOC2</scope>
    <scope>CHARACTERIZATION OF VARIANT ARG-71</scope>
    <scope>MUTAGENESIS OF ASP-41; HIS-53; GLN-71; PHE-74; 131-MET--LEU-133 AND HIS-132</scope>
</reference>
<reference evidence="16" key="13">
    <citation type="journal article" date="2022" name="Nature">
        <title>Structural basis for SHOC2 modulation of RAS signalling.</title>
        <authorList>
            <person name="Liau N.P.D."/>
            <person name="Johnson M.C."/>
            <person name="Izadi S."/>
            <person name="Gerosa L."/>
            <person name="Hammel M."/>
            <person name="Bruning J.M."/>
            <person name="Wendorff T.J."/>
            <person name="Phung W."/>
            <person name="Hymowitz S.G."/>
            <person name="Sudhamsu J."/>
        </authorList>
    </citation>
    <scope>STRUCTURE BY ELECTRON MICROSCOPY (2.95 ANGSTROMS) IN COMPLEX WITH MG(2+); GTP ANALOG; PPP1CC AND SHOC2</scope>
    <scope>FUNCTION</scope>
    <scope>COFACTOR</scope>
    <scope>INTERACTION WITH PPP1CA; PPP1CB; PPP1CC AND SHOC2</scope>
</reference>
<reference evidence="19" key="14">
    <citation type="journal article" date="2022" name="Nature">
        <title>Structure-function analysis of the SHOC2-MRAS-PP1c holophosphatase complex.</title>
        <authorList>
            <person name="Kwon J.J."/>
            <person name="Hajian B."/>
            <person name="Bian Y."/>
            <person name="Young L.C."/>
            <person name="Amor A.J."/>
            <person name="Fuller J.R."/>
            <person name="Fraley C.V."/>
            <person name="Sykes A.M."/>
            <person name="So J."/>
            <person name="Pan J."/>
            <person name="Baker L."/>
            <person name="Lee S.J."/>
            <person name="Wheeler D.B."/>
            <person name="Mayhew D.L."/>
            <person name="Persky N.S."/>
            <person name="Yang X."/>
            <person name="Root D.E."/>
            <person name="Barsotti A.M."/>
            <person name="Stamford A.W."/>
            <person name="Perry C.K."/>
            <person name="Burgin A."/>
            <person name="McCormick F."/>
            <person name="Lemke C.T."/>
            <person name="Hahn W.C."/>
            <person name="Aguirre A.J."/>
        </authorList>
    </citation>
    <scope>STRUCTURE BY ELECTRON MICROSCOPY (2.89 ANGSTROMS) OF 1-182 OF MUTANT LEU-71 IN COMPLEX WITH MG(2+); GTP; PPP1CA AND SHOC2</scope>
    <scope>FUNCTION</scope>
    <scope>COFACTOR</scope>
    <scope>INTERACTION WITH PPP1CA; PPP1CB; PPP1CC AND SHOC2</scope>
    <scope>CHARACTERIZATION OF VARIANT ARG-71</scope>
    <scope>MUTAGENESIS OF GLN-71</scope>
</reference>
<reference evidence="18" key="15">
    <citation type="journal article" date="2022" name="Nature">
        <title>Structure of the MRAS-SHOC2-PP1C phosphatase complex.</title>
        <authorList>
            <person name="Hauseman Z.J."/>
            <person name="Fodor M."/>
            <person name="Dhembi A."/>
            <person name="Viscomi J."/>
            <person name="Egli D."/>
            <person name="Bleu M."/>
            <person name="Katz S."/>
            <person name="Park E."/>
            <person name="Jang D.M."/>
            <person name="Porter K.A."/>
            <person name="Meili F."/>
            <person name="Guo H."/>
            <person name="Kerr G."/>
            <person name="Molle S."/>
            <person name="Velez-Vega C."/>
            <person name="Beyer K.S."/>
            <person name="Galli G.G."/>
            <person name="Maira S.M."/>
            <person name="Stams T."/>
            <person name="Clark K."/>
            <person name="Eck M.J."/>
            <person name="Tordella L."/>
            <person name="Thoma C.R."/>
            <person name="King D.A."/>
        </authorList>
    </citation>
    <scope>X-RAY CRYSTALLOGRAPHY (1.95 ANGSTROMS) OF 1-178 OF MUTANT ARG-71 IN COMPLEX WITH MG(2+); GTP ANALOG; PPP1CC AND SHOC2; PPP1CA AND SHOC2</scope>
    <scope>FUNCTION</scope>
    <scope>COFACTOR</scope>
    <scope>INTERACTION WITH PPP1CA AND SHOC2</scope>
    <scope>CHARACTERIZATION OF VARIANT ARG-71</scope>
    <scope>MUTAGENESIS OF GLN-71</scope>
</reference>
<evidence type="ECO:0000250" key="1"/>
<evidence type="ECO:0000250" key="2">
    <source>
        <dbReference type="UniProtKB" id="O08989"/>
    </source>
</evidence>
<evidence type="ECO:0000250" key="3">
    <source>
        <dbReference type="UniProtKB" id="P01116"/>
    </source>
</evidence>
<evidence type="ECO:0000250" key="4">
    <source>
        <dbReference type="UniProtKB" id="P97538"/>
    </source>
</evidence>
<evidence type="ECO:0000269" key="5">
    <source>
    </source>
</evidence>
<evidence type="ECO:0000269" key="6">
    <source>
    </source>
</evidence>
<evidence type="ECO:0000269" key="7">
    <source>
    </source>
</evidence>
<evidence type="ECO:0000269" key="8">
    <source>
    </source>
</evidence>
<evidence type="ECO:0000269" key="9">
    <source>
    </source>
</evidence>
<evidence type="ECO:0000269" key="10">
    <source>
    </source>
</evidence>
<evidence type="ECO:0000269" key="11">
    <source>
    </source>
</evidence>
<evidence type="ECO:0000269" key="12">
    <source>
    </source>
</evidence>
<evidence type="ECO:0000303" key="13">
    <source>
    </source>
</evidence>
<evidence type="ECO:0000303" key="14">
    <source>
    </source>
</evidence>
<evidence type="ECO:0000305" key="15"/>
<evidence type="ECO:0007744" key="16">
    <source>
        <dbReference type="PDB" id="7SD0"/>
    </source>
</evidence>
<evidence type="ECO:0007744" key="17">
    <source>
        <dbReference type="PDB" id="7TVF"/>
    </source>
</evidence>
<evidence type="ECO:0007744" key="18">
    <source>
        <dbReference type="PDB" id="7TXH"/>
    </source>
</evidence>
<evidence type="ECO:0007744" key="19">
    <source>
        <dbReference type="PDB" id="7UPI"/>
    </source>
</evidence>
<evidence type="ECO:0007829" key="20">
    <source>
        <dbReference type="PDB" id="7SD0"/>
    </source>
</evidence>
<evidence type="ECO:0007829" key="21">
    <source>
        <dbReference type="PDB" id="7TXH"/>
    </source>
</evidence>
<sequence>MATSAVPSDNLPTYKLVVVGDGGVGKSALTIQFFQKIFVPDYDPTIEDSYLKHTEIDNQWAILDVLDTAGQEEFSAMREQYMRTGDGFLIVYSVTDKASFEHVDRFHQLILRVKDRESFPMILVANKVDLMHLRKITREQGKEMATKHNIPYIETSAKDPPLNVDKAFHDLVRVIRQQIPEKSQKKKKKTKWRGDRATGTHKLQCVIL</sequence>
<name>RASM_HUMAN</name>
<comment type="function">
    <text evidence="5 6 8 9 10 11 12">Signal transducer in the Ras-MAPK signaling pathway that regulates cell proliferation and survival (PubMed:16630891, PubMed:28289718, PubMed:35768504, PubMed:35830882, PubMed:35831509, PubMed:36175670). Core component of the SHOC2-MRAS-PP1c (SMP) holophosphatase complex that regulates the MAPK pathway activation (PubMed:16630891, PubMed:35768504, PubMed:35830882, PubMed:35831509, PubMed:36175670). The formation of the SMP complex only occurs when MRAS is GTP-bound (PubMed:35768504, PubMed:35830882, PubMed:35831509, PubMed:36175670, PubMed:39809765). MRAS has low intrinsic GTPase activity and may require additional factors for activation (PubMed:39809765). The SMP complex specifically dephosphorylates the inhibitory phosphorylation at 'Ser-259' of RAF1 kinase, 'Ser-365' of BRAF kinase and 'Ser-214' of ARAF kinase, stimulating their kinase activities (PubMed:16630891, PubMed:35768504, PubMed:35830882, PubMed:35831509, PubMed:36175670).</text>
</comment>
<comment type="catalytic activity">
    <reaction evidence="3">
        <text>GTP + H2O = GDP + phosphate + H(+)</text>
        <dbReference type="Rhea" id="RHEA:19669"/>
        <dbReference type="ChEBI" id="CHEBI:15377"/>
        <dbReference type="ChEBI" id="CHEBI:15378"/>
        <dbReference type="ChEBI" id="CHEBI:37565"/>
        <dbReference type="ChEBI" id="CHEBI:43474"/>
        <dbReference type="ChEBI" id="CHEBI:58189"/>
        <dbReference type="EC" id="3.6.5.2"/>
    </reaction>
</comment>
<comment type="cofactor">
    <cofactor evidence="8 9 10 11">
        <name>Mg(2+)</name>
        <dbReference type="ChEBI" id="CHEBI:18420"/>
    </cofactor>
    <text evidence="8 9 10 11">Binds 1 magnesium ion per subunit.</text>
</comment>
<comment type="subunit">
    <text evidence="2 4 5 8 9 10 11 12">Component of the SHOC2-MRAS-PP1c (SMP) holophosphatase complex consisting of SHOC2, GTP-bound M-Ras/MRAS and the catalytic subunit of protein phosphatase 1 (either PPP1CA, PPP1CB or PPP1CC) (PubMed:16630891, PubMed:35768504, PubMed:35830882, PubMed:35831509, PubMed:36175670, PubMed:39809765). Interacts (active GTP-bound form) with both SHOC2 and PP1c (all isoforms) to form a tertiary complex; SHOC2 and PP1c preferably bind M-Ras/MRAS, but they also bind K-Ras/KRAS, N-Ras/NRAS and H-Ras/HRAS (PubMed:35768504, PubMed:35830882, PubMed:35831509, PubMed:36175670, PubMed:39809765). Interacts with RGL3 (By similarity). Interacts (active GTP-bound form preferentially) with RGS14 (By similarity).</text>
</comment>
<comment type="subcellular location">
    <subcellularLocation>
        <location evidence="15">Cell membrane</location>
        <topology evidence="15">Lipid-anchor</topology>
        <orientation evidence="15">Cytoplasmic side</orientation>
    </subcellularLocation>
</comment>
<comment type="alternative products">
    <event type="alternative splicing"/>
    <isoform>
        <id>O14807-1</id>
        <name>1</name>
        <sequence type="displayed"/>
    </isoform>
    <isoform>
        <id>O14807-2</id>
        <name>2</name>
        <sequence type="described" ref="VSP_044792"/>
    </isoform>
</comment>
<comment type="tissue specificity">
    <text>Expression highly restricted to the brain and heart.</text>
</comment>
<comment type="induction">
    <text>By IL9/interleukin-9, but not by IL2/interleukin-2 or IL4/interleukin-4.</text>
</comment>
<comment type="disease" evidence="6 7">
    <disease id="DI-05614">
        <name>Noonan syndrome 11</name>
        <acronym>NS11</acronym>
        <description>A form of Noonan syndrome, a disease characterized by short stature, facial dysmorphic features such as hypertelorism, a downward eyeslant and low-set posteriorly rotated ears, and a high incidence of congenital heart defects and hypertrophic cardiomyopathy. Other features can include a short neck with webbing or redundancy of skin, deafness, motor delay, variable intellectual deficits, multiple skeletal defects, cryptorchidism, and bleeding diathesis. Individuals with Noonan syndrome are at risk of juvenile myelomonocytic leukemia, a myeloproliferative disorder characterized by excessive production of myelomonocytic cells. NS11 inheritance is autosomal dominant.</description>
        <dbReference type="MIM" id="618499"/>
    </disease>
    <text>The disease is caused by variants affecting the gene represented in this entry.</text>
</comment>
<comment type="similarity">
    <text evidence="15">Belongs to the small GTPase superfamily. Ras family.</text>
</comment>
<protein>
    <recommendedName>
        <fullName>Ras-related protein M-Ras</fullName>
        <ecNumber evidence="3">3.6.5.2</ecNumber>
    </recommendedName>
    <alternativeName>
        <fullName>Ras-related protein R-Ras3</fullName>
    </alternativeName>
</protein>
<gene>
    <name type="primary">MRAS</name>
    <name type="synonym">RRAS3</name>
</gene>
<feature type="chain" id="PRO_0000082654" description="Ras-related protein M-Ras">
    <location>
        <begin position="1"/>
        <end position="205"/>
    </location>
</feature>
<feature type="propeptide" id="PRO_0000281304" description="Removed in mature form" evidence="1">
    <location>
        <begin position="206"/>
        <end position="208"/>
    </location>
</feature>
<feature type="short sequence motif" description="Effector region">
    <location>
        <begin position="42"/>
        <end position="50"/>
    </location>
</feature>
<feature type="binding site" evidence="10 19">
    <location>
        <position position="21"/>
    </location>
    <ligand>
        <name>GTP</name>
        <dbReference type="ChEBI" id="CHEBI:37565"/>
    </ligand>
</feature>
<feature type="binding site" evidence="10 19">
    <location>
        <position position="22"/>
    </location>
    <ligand>
        <name>GTP</name>
        <dbReference type="ChEBI" id="CHEBI:37565"/>
    </ligand>
</feature>
<feature type="binding site" evidence="10 19">
    <location>
        <position position="23"/>
    </location>
    <ligand>
        <name>GTP</name>
        <dbReference type="ChEBI" id="CHEBI:37565"/>
    </ligand>
</feature>
<feature type="binding site" evidence="10 19">
    <location>
        <position position="24"/>
    </location>
    <ligand>
        <name>GTP</name>
        <dbReference type="ChEBI" id="CHEBI:37565"/>
    </ligand>
</feature>
<feature type="binding site" evidence="10 19">
    <location>
        <position position="25"/>
    </location>
    <ligand>
        <name>GTP</name>
        <dbReference type="ChEBI" id="CHEBI:37565"/>
    </ligand>
</feature>
<feature type="binding site" evidence="10 19">
    <location>
        <position position="26"/>
    </location>
    <ligand>
        <name>GTP</name>
        <dbReference type="ChEBI" id="CHEBI:37565"/>
    </ligand>
</feature>
<feature type="binding site" evidence="10 19">
    <location>
        <position position="27"/>
    </location>
    <ligand>
        <name>GTP</name>
        <dbReference type="ChEBI" id="CHEBI:37565"/>
    </ligand>
</feature>
<feature type="binding site" evidence="8 9 10 11 16 17 18 19">
    <location>
        <position position="27"/>
    </location>
    <ligand>
        <name>Mg(2+)</name>
        <dbReference type="ChEBI" id="CHEBI:18420"/>
    </ligand>
</feature>
<feature type="binding site" evidence="10 19">
    <location>
        <position position="28"/>
    </location>
    <ligand>
        <name>GTP</name>
        <dbReference type="ChEBI" id="CHEBI:37565"/>
    </ligand>
</feature>
<feature type="binding site" evidence="10 19">
    <location>
        <position position="38"/>
    </location>
    <ligand>
        <name>GTP</name>
        <dbReference type="ChEBI" id="CHEBI:37565"/>
    </ligand>
</feature>
<feature type="binding site" evidence="10 19">
    <location>
        <position position="39"/>
    </location>
    <ligand>
        <name>GTP</name>
        <dbReference type="ChEBI" id="CHEBI:37565"/>
    </ligand>
</feature>
<feature type="binding site" evidence="10 19">
    <location>
        <position position="40"/>
    </location>
    <ligand>
        <name>GTP</name>
        <dbReference type="ChEBI" id="CHEBI:37565"/>
    </ligand>
</feature>
<feature type="binding site" evidence="10 19">
    <location>
        <position position="42"/>
    </location>
    <ligand>
        <name>GTP</name>
        <dbReference type="ChEBI" id="CHEBI:37565"/>
    </ligand>
</feature>
<feature type="binding site" evidence="10 19">
    <location>
        <position position="44"/>
    </location>
    <ligand>
        <name>GTP</name>
        <dbReference type="ChEBI" id="CHEBI:37565"/>
    </ligand>
</feature>
<feature type="binding site" evidence="10 19">
    <location>
        <position position="45"/>
    </location>
    <ligand>
        <name>GTP</name>
        <dbReference type="ChEBI" id="CHEBI:37565"/>
    </ligand>
</feature>
<feature type="binding site" evidence="8 9 10 11 16 17 18 19">
    <location>
        <position position="45"/>
    </location>
    <ligand>
        <name>Mg(2+)</name>
        <dbReference type="ChEBI" id="CHEBI:18420"/>
    </ligand>
</feature>
<feature type="binding site" evidence="8 9 10 11 16 17 18 19">
    <location>
        <position position="67"/>
    </location>
    <ligand>
        <name>Mg(2+)</name>
        <dbReference type="ChEBI" id="CHEBI:18420"/>
    </ligand>
</feature>
<feature type="binding site" evidence="10 19">
    <location>
        <position position="70"/>
    </location>
    <ligand>
        <name>GTP</name>
        <dbReference type="ChEBI" id="CHEBI:37565"/>
    </ligand>
</feature>
<feature type="binding site" evidence="10 19">
    <location>
        <position position="126"/>
    </location>
    <ligand>
        <name>GTP</name>
        <dbReference type="ChEBI" id="CHEBI:37565"/>
    </ligand>
</feature>
<feature type="binding site" evidence="10 19">
    <location>
        <position position="127"/>
    </location>
    <ligand>
        <name>GTP</name>
        <dbReference type="ChEBI" id="CHEBI:37565"/>
    </ligand>
</feature>
<feature type="binding site" evidence="10 19">
    <location>
        <position position="129"/>
    </location>
    <ligand>
        <name>GTP</name>
        <dbReference type="ChEBI" id="CHEBI:37565"/>
    </ligand>
</feature>
<feature type="binding site" evidence="10 19">
    <location>
        <position position="156"/>
    </location>
    <ligand>
        <name>GTP</name>
        <dbReference type="ChEBI" id="CHEBI:37565"/>
    </ligand>
</feature>
<feature type="binding site" evidence="10 19">
    <location>
        <position position="157"/>
    </location>
    <ligand>
        <name>GTP</name>
        <dbReference type="ChEBI" id="CHEBI:37565"/>
    </ligand>
</feature>
<feature type="binding site" evidence="10 19">
    <location>
        <position position="158"/>
    </location>
    <ligand>
        <name>GTP</name>
        <dbReference type="ChEBI" id="CHEBI:37565"/>
    </ligand>
</feature>
<feature type="modified residue" description="Cysteine methyl ester" evidence="1">
    <location>
        <position position="205"/>
    </location>
</feature>
<feature type="lipid moiety-binding region" description="S-geranylgeranyl cysteine" evidence="1">
    <location>
        <position position="205"/>
    </location>
</feature>
<feature type="splice variant" id="VSP_044792" description="In isoform 2." evidence="13 14">
    <location>
        <begin position="1"/>
        <end position="76"/>
    </location>
</feature>
<feature type="sequence variant" id="VAR_083112" description="In NS11; constitutively active form; increased GTPase activity." evidence="6">
    <original>G</original>
    <variation>V</variation>
    <location>
        <position position="23"/>
    </location>
</feature>
<feature type="sequence variant" id="VAR_083113" description="In NS11." evidence="6">
    <original>T</original>
    <variation>I</variation>
    <location>
        <position position="68"/>
    </location>
</feature>
<feature type="sequence variant" id="VAR_083114" description="In NS11; promotes SMP complex formation." evidence="7 9 10 11">
    <original>Q</original>
    <variation>R</variation>
    <location>
        <position position="71"/>
    </location>
</feature>
<feature type="mutagenesis site" description="Promotes GTP binding." evidence="12">
    <original>G</original>
    <variation>V</variation>
    <location>
        <position position="22"/>
    </location>
</feature>
<feature type="mutagenesis site" description="Impairs SMP complex formation." evidence="11">
    <original>D</original>
    <variation>A</variation>
    <location>
        <position position="41"/>
    </location>
</feature>
<feature type="mutagenesis site" description="Impairs SMP complex formation." evidence="11">
    <original>H</original>
    <variation>A</variation>
    <location>
        <position position="53"/>
    </location>
</feature>
<feature type="mutagenesis site" description="Promotes SMP complex formation. Promotes GTP binding." evidence="9 10 11 12">
    <original>Q</original>
    <variation>L</variation>
    <location>
        <position position="71"/>
    </location>
</feature>
<feature type="mutagenesis site" description="Impairs SMP complex formation." evidence="11">
    <original>F</original>
    <variation>A</variation>
    <variation>Y</variation>
    <location>
        <position position="74"/>
    </location>
</feature>
<feature type="mutagenesis site" description="Impairs SMP complex formation when mutated to corresponding residues in HRAS." evidence="11">
    <original>MHL</original>
    <variation>AA</variation>
    <location>
        <begin position="131"/>
        <end position="133"/>
    </location>
</feature>
<feature type="mutagenesis site" description="Impairs SMP complex formation when mutated to corresponding residues in KRAS." evidence="11">
    <original>MHL</original>
    <variation>PS</variation>
    <location>
        <begin position="131"/>
        <end position="133"/>
    </location>
</feature>
<feature type="mutagenesis site" description="Impairs SMP complex formation." evidence="11">
    <original>H</original>
    <variation>A</variation>
    <location>
        <position position="132"/>
    </location>
</feature>
<feature type="strand" evidence="21">
    <location>
        <begin position="13"/>
        <end position="21"/>
    </location>
</feature>
<feature type="helix" evidence="21">
    <location>
        <begin position="26"/>
        <end position="35"/>
    </location>
</feature>
<feature type="strand" evidence="21">
    <location>
        <begin position="46"/>
        <end position="56"/>
    </location>
</feature>
<feature type="strand" evidence="21">
    <location>
        <begin position="59"/>
        <end position="68"/>
    </location>
</feature>
<feature type="helix" evidence="21">
    <location>
        <begin position="72"/>
        <end position="74"/>
    </location>
</feature>
<feature type="helix" evidence="20">
    <location>
        <begin position="75"/>
        <end position="77"/>
    </location>
</feature>
<feature type="helix" evidence="21">
    <location>
        <begin position="78"/>
        <end position="83"/>
    </location>
</feature>
<feature type="strand" evidence="21">
    <location>
        <begin position="86"/>
        <end position="93"/>
    </location>
</feature>
<feature type="helix" evidence="21">
    <location>
        <begin position="97"/>
        <end position="101"/>
    </location>
</feature>
<feature type="helix" evidence="21">
    <location>
        <begin position="103"/>
        <end position="114"/>
    </location>
</feature>
<feature type="strand" evidence="21">
    <location>
        <begin position="121"/>
        <end position="126"/>
    </location>
</feature>
<feature type="helix" evidence="21">
    <location>
        <begin position="131"/>
        <end position="133"/>
    </location>
</feature>
<feature type="helix" evidence="21">
    <location>
        <begin position="138"/>
        <end position="148"/>
    </location>
</feature>
<feature type="strand" evidence="21">
    <location>
        <begin position="152"/>
        <end position="156"/>
    </location>
</feature>
<feature type="strand" evidence="21">
    <location>
        <begin position="158"/>
        <end position="160"/>
    </location>
</feature>
<feature type="helix" evidence="21">
    <location>
        <begin position="164"/>
        <end position="176"/>
    </location>
</feature>
<accession>O14807</accession>
<accession>B4DIK0</accession>
<accession>Q86WX8</accession>
<organism>
    <name type="scientific">Homo sapiens</name>
    <name type="common">Human</name>
    <dbReference type="NCBI Taxonomy" id="9606"/>
    <lineage>
        <taxon>Eukaryota</taxon>
        <taxon>Metazoa</taxon>
        <taxon>Chordata</taxon>
        <taxon>Craniata</taxon>
        <taxon>Vertebrata</taxon>
        <taxon>Euteleostomi</taxon>
        <taxon>Mammalia</taxon>
        <taxon>Eutheria</taxon>
        <taxon>Euarchontoglires</taxon>
        <taxon>Primates</taxon>
        <taxon>Haplorrhini</taxon>
        <taxon>Catarrhini</taxon>
        <taxon>Hominidae</taxon>
        <taxon>Homo</taxon>
    </lineage>
</organism>
<proteinExistence type="evidence at protein level"/>
<keyword id="KW-0002">3D-structure</keyword>
<keyword id="KW-0025">Alternative splicing</keyword>
<keyword id="KW-1003">Cell membrane</keyword>
<keyword id="KW-0225">Disease variant</keyword>
<keyword id="KW-0342">GTP-binding</keyword>
<keyword id="KW-0378">Hydrolase</keyword>
<keyword id="KW-0449">Lipoprotein</keyword>
<keyword id="KW-0472">Membrane</keyword>
<keyword id="KW-0488">Methylation</keyword>
<keyword id="KW-0547">Nucleotide-binding</keyword>
<keyword id="KW-0636">Prenylation</keyword>
<keyword id="KW-1267">Proteomics identification</keyword>
<keyword id="KW-1185">Reference proteome</keyword>
<dbReference type="EC" id="3.6.5.2" evidence="3"/>
<dbReference type="EMBL" id="AF022080">
    <property type="protein sequence ID" value="AAC52085.1"/>
    <property type="molecule type" value="mRNA"/>
</dbReference>
<dbReference type="EMBL" id="AF043938">
    <property type="protein sequence ID" value="AAD02287.1"/>
    <property type="molecule type" value="mRNA"/>
</dbReference>
<dbReference type="EMBL" id="AF493918">
    <property type="protein sequence ID" value="AAM12632.1"/>
    <property type="molecule type" value="mRNA"/>
</dbReference>
<dbReference type="EMBL" id="AK295640">
    <property type="protein sequence ID" value="BAG58512.1"/>
    <property type="molecule type" value="mRNA"/>
</dbReference>
<dbReference type="EMBL" id="AK316071">
    <property type="protein sequence ID" value="BAH14442.1"/>
    <property type="molecule type" value="mRNA"/>
</dbReference>
<dbReference type="EMBL" id="BT020057">
    <property type="protein sequence ID" value="AAV38860.1"/>
    <property type="molecule type" value="mRNA"/>
</dbReference>
<dbReference type="EMBL" id="AC022337">
    <property type="status" value="NOT_ANNOTATED_CDS"/>
    <property type="molecule type" value="Genomic_DNA"/>
</dbReference>
<dbReference type="EMBL" id="AC022497">
    <property type="status" value="NOT_ANNOTATED_CDS"/>
    <property type="molecule type" value="Genomic_DNA"/>
</dbReference>
<dbReference type="EMBL" id="BC047690">
    <property type="status" value="NOT_ANNOTATED_CDS"/>
    <property type="molecule type" value="mRNA"/>
</dbReference>
<dbReference type="CCDS" id="CCDS3100.1">
    <molecule id="O14807-1"/>
</dbReference>
<dbReference type="CCDS" id="CCDS58855.1">
    <molecule id="O14807-2"/>
</dbReference>
<dbReference type="RefSeq" id="NP_001078518.1">
    <molecule id="O14807-1"/>
    <property type="nucleotide sequence ID" value="NM_001085049.3"/>
</dbReference>
<dbReference type="RefSeq" id="NP_001239019.1">
    <molecule id="O14807-1"/>
    <property type="nucleotide sequence ID" value="NM_001252090.2"/>
</dbReference>
<dbReference type="RefSeq" id="NP_001239020.1">
    <molecule id="O14807-2"/>
    <property type="nucleotide sequence ID" value="NM_001252091.1"/>
</dbReference>
<dbReference type="RefSeq" id="NP_001239021.1">
    <molecule id="O14807-2"/>
    <property type="nucleotide sequence ID" value="NM_001252092.2"/>
</dbReference>
<dbReference type="RefSeq" id="NP_001239022.1">
    <molecule id="O14807-2"/>
    <property type="nucleotide sequence ID" value="NM_001252093.2"/>
</dbReference>
<dbReference type="RefSeq" id="NP_036351.3">
    <molecule id="O14807-1"/>
    <property type="nucleotide sequence ID" value="NM_012219.4"/>
</dbReference>
<dbReference type="RefSeq" id="XP_005247285.1">
    <molecule id="O14807-1"/>
    <property type="nucleotide sequence ID" value="XM_005247228.2"/>
</dbReference>
<dbReference type="RefSeq" id="XP_016861376.1">
    <property type="nucleotide sequence ID" value="XM_017005887.1"/>
</dbReference>
<dbReference type="RefSeq" id="XP_024309164.1">
    <molecule id="O14807-1"/>
    <property type="nucleotide sequence ID" value="XM_024453396.2"/>
</dbReference>
<dbReference type="RefSeq" id="XP_047303651.1">
    <molecule id="O14807-1"/>
    <property type="nucleotide sequence ID" value="XM_047447695.1"/>
</dbReference>
<dbReference type="RefSeq" id="XP_047303652.1">
    <molecule id="O14807-1"/>
    <property type="nucleotide sequence ID" value="XM_047447696.1"/>
</dbReference>
<dbReference type="RefSeq" id="XP_047303653.1">
    <molecule id="O14807-1"/>
    <property type="nucleotide sequence ID" value="XM_047447697.1"/>
</dbReference>
<dbReference type="RefSeq" id="XP_047303654.1">
    <molecule id="O14807-1"/>
    <property type="nucleotide sequence ID" value="XM_047447698.1"/>
</dbReference>
<dbReference type="RefSeq" id="XP_047303655.1">
    <molecule id="O14807-1"/>
    <property type="nucleotide sequence ID" value="XM_047447699.1"/>
</dbReference>
<dbReference type="RefSeq" id="XP_054201645.1">
    <molecule id="O14807-1"/>
    <property type="nucleotide sequence ID" value="XM_054345670.1"/>
</dbReference>
<dbReference type="RefSeq" id="XP_054201646.1">
    <molecule id="O14807-1"/>
    <property type="nucleotide sequence ID" value="XM_054345671.1"/>
</dbReference>
<dbReference type="RefSeq" id="XP_054201647.1">
    <molecule id="O14807-1"/>
    <property type="nucleotide sequence ID" value="XM_054345672.1"/>
</dbReference>
<dbReference type="RefSeq" id="XP_054201648.1">
    <molecule id="O14807-1"/>
    <property type="nucleotide sequence ID" value="XM_054345673.1"/>
</dbReference>
<dbReference type="PDB" id="7SD0">
    <property type="method" value="EM"/>
    <property type="resolution" value="2.95 A"/>
    <property type="chains" value="B=1-208"/>
</dbReference>
<dbReference type="PDB" id="7TVF">
    <property type="method" value="X-ray"/>
    <property type="resolution" value="2.17 A"/>
    <property type="chains" value="B/E=1-178"/>
</dbReference>
<dbReference type="PDB" id="7TXH">
    <property type="method" value="X-ray"/>
    <property type="resolution" value="1.95 A"/>
    <property type="chains" value="A/D=1-178"/>
</dbReference>
<dbReference type="PDB" id="7UPI">
    <property type="method" value="EM"/>
    <property type="resolution" value="2.89 A"/>
    <property type="chains" value="A=1-182"/>
</dbReference>
<dbReference type="PDB" id="9B4R">
    <property type="method" value="X-ray"/>
    <property type="resolution" value="2.10 A"/>
    <property type="chains" value="A=11-178"/>
</dbReference>
<dbReference type="PDB" id="9B4T">
    <property type="method" value="X-ray"/>
    <property type="resolution" value="2.75 A"/>
    <property type="chains" value="B=1-178"/>
</dbReference>
<dbReference type="PDB" id="9C1A">
    <property type="method" value="X-ray"/>
    <property type="resolution" value="1.96 A"/>
    <property type="chains" value="A=1-178"/>
</dbReference>
<dbReference type="PDB" id="9C1B">
    <property type="method" value="X-ray"/>
    <property type="resolution" value="2.27 A"/>
    <property type="chains" value="A/B/C/D=1-204"/>
</dbReference>
<dbReference type="PDBsum" id="7SD0"/>
<dbReference type="PDBsum" id="7TVF"/>
<dbReference type="PDBsum" id="7TXH"/>
<dbReference type="PDBsum" id="7UPI"/>
<dbReference type="PDBsum" id="9B4R"/>
<dbReference type="PDBsum" id="9B4T"/>
<dbReference type="PDBsum" id="9C1A"/>
<dbReference type="PDBsum" id="9C1B"/>
<dbReference type="EMDB" id="EMD-25044"/>
<dbReference type="EMDB" id="EMD-26667"/>
<dbReference type="SASBDB" id="O14807"/>
<dbReference type="SMR" id="O14807"/>
<dbReference type="BioGRID" id="116486">
    <property type="interactions" value="14"/>
</dbReference>
<dbReference type="ComplexPortal" id="CPX-25716">
    <property type="entry name" value="SHOC2-MRAS-PPP1CA complex"/>
</dbReference>
<dbReference type="ComplexPortal" id="CPX-25719">
    <property type="entry name" value="SHOC2-MRAS-PPP1CB complex"/>
</dbReference>
<dbReference type="ComplexPortal" id="CPX-25720">
    <property type="entry name" value="SHOC2-MRAS-PPP1CC complex"/>
</dbReference>
<dbReference type="CORUM" id="O14807"/>
<dbReference type="DIP" id="DIP-35406N"/>
<dbReference type="FunCoup" id="O14807">
    <property type="interactions" value="1429"/>
</dbReference>
<dbReference type="IntAct" id="O14807">
    <property type="interactions" value="5"/>
</dbReference>
<dbReference type="MINT" id="O14807"/>
<dbReference type="STRING" id="9606.ENSP00000289104"/>
<dbReference type="GlyGen" id="O14807">
    <property type="glycosylation" value="1 site, 1 O-linked glycan (1 site)"/>
</dbReference>
<dbReference type="iPTMnet" id="O14807"/>
<dbReference type="PhosphoSitePlus" id="O14807"/>
<dbReference type="BioMuta" id="MRAS"/>
<dbReference type="jPOST" id="O14807"/>
<dbReference type="MassIVE" id="O14807"/>
<dbReference type="PaxDb" id="9606-ENSP00000289104"/>
<dbReference type="PeptideAtlas" id="O14807"/>
<dbReference type="ProteomicsDB" id="4310"/>
<dbReference type="ProteomicsDB" id="48250">
    <molecule id="O14807-1"/>
</dbReference>
<dbReference type="Pumba" id="O14807"/>
<dbReference type="ABCD" id="O14807">
    <property type="antibodies" value="1 sequenced antibody"/>
</dbReference>
<dbReference type="Antibodypedia" id="33434">
    <property type="antibodies" value="161 antibodies from 26 providers"/>
</dbReference>
<dbReference type="DNASU" id="22808"/>
<dbReference type="Ensembl" id="ENST00000289104.8">
    <molecule id="O14807-1"/>
    <property type="protein sequence ID" value="ENSP00000289104.4"/>
    <property type="gene ID" value="ENSG00000158186.13"/>
</dbReference>
<dbReference type="Ensembl" id="ENST00000423968.7">
    <molecule id="O14807-1"/>
    <property type="protein sequence ID" value="ENSP00000389682.2"/>
    <property type="gene ID" value="ENSG00000158186.13"/>
</dbReference>
<dbReference type="Ensembl" id="ENST00000464896.5">
    <molecule id="O14807-2"/>
    <property type="protein sequence ID" value="ENSP00000419582.1"/>
    <property type="gene ID" value="ENSG00000158186.13"/>
</dbReference>
<dbReference type="Ensembl" id="ENST00000474559.1">
    <molecule id="O14807-1"/>
    <property type="protein sequence ID" value="ENSP00000418356.1"/>
    <property type="gene ID" value="ENSG00000158186.13"/>
</dbReference>
<dbReference type="Ensembl" id="ENST00000614350.4">
    <molecule id="O14807-2"/>
    <property type="protein sequence ID" value="ENSP00000484586.1"/>
    <property type="gene ID" value="ENSG00000158186.13"/>
</dbReference>
<dbReference type="Ensembl" id="ENST00000621127.4">
    <molecule id="O14807-2"/>
    <property type="protein sequence ID" value="ENSP00000481637.1"/>
    <property type="gene ID" value="ENSG00000158186.13"/>
</dbReference>
<dbReference type="GeneID" id="22808"/>
<dbReference type="KEGG" id="hsa:22808"/>
<dbReference type="MANE-Select" id="ENST00000423968.7">
    <property type="protein sequence ID" value="ENSP00000389682.2"/>
    <property type="RefSeq nucleotide sequence ID" value="NM_001085049.3"/>
    <property type="RefSeq protein sequence ID" value="NP_001078518.1"/>
</dbReference>
<dbReference type="UCSC" id="uc011bmi.3">
    <molecule id="O14807-1"/>
    <property type="organism name" value="human"/>
</dbReference>
<dbReference type="AGR" id="HGNC:7227"/>
<dbReference type="CTD" id="22808"/>
<dbReference type="DisGeNET" id="22808"/>
<dbReference type="GeneCards" id="MRAS"/>
<dbReference type="GeneReviews" id="MRAS"/>
<dbReference type="HGNC" id="HGNC:7227">
    <property type="gene designation" value="MRAS"/>
</dbReference>
<dbReference type="HPA" id="ENSG00000158186">
    <property type="expression patterns" value="Tissue enhanced (brain, heart muscle)"/>
</dbReference>
<dbReference type="MalaCards" id="MRAS"/>
<dbReference type="MIM" id="608435">
    <property type="type" value="gene"/>
</dbReference>
<dbReference type="MIM" id="618499">
    <property type="type" value="phenotype"/>
</dbReference>
<dbReference type="neXtProt" id="NX_O14807"/>
<dbReference type="OpenTargets" id="ENSG00000158186"/>
<dbReference type="Orphanet" id="648">
    <property type="disease" value="Noonan syndrome"/>
</dbReference>
<dbReference type="PharmGKB" id="PA30932"/>
<dbReference type="VEuPathDB" id="HostDB:ENSG00000158186"/>
<dbReference type="eggNOG" id="KOG0395">
    <property type="taxonomic scope" value="Eukaryota"/>
</dbReference>
<dbReference type="GeneTree" id="ENSGT00940000156353"/>
<dbReference type="HOGENOM" id="CLU_041217_9_8_1"/>
<dbReference type="InParanoid" id="O14807"/>
<dbReference type="OMA" id="DRDVYPM"/>
<dbReference type="OrthoDB" id="5976022at2759"/>
<dbReference type="PAN-GO" id="O14807">
    <property type="GO annotations" value="5 GO annotations based on evolutionary models"/>
</dbReference>
<dbReference type="PhylomeDB" id="O14807"/>
<dbReference type="TreeFam" id="TF312796"/>
<dbReference type="PathwayCommons" id="O14807"/>
<dbReference type="Reactome" id="R-HSA-5673000">
    <property type="pathway name" value="RAF activation"/>
</dbReference>
<dbReference type="Reactome" id="R-HSA-9726840">
    <property type="pathway name" value="SHOC2 M1731 mutant abolishes MRAS complex function"/>
</dbReference>
<dbReference type="Reactome" id="R-HSA-9726842">
    <property type="pathway name" value="Gain-of-function MRAS complexes activate RAF signaling"/>
</dbReference>
<dbReference type="SignaLink" id="O14807"/>
<dbReference type="SIGNOR" id="O14807"/>
<dbReference type="BioGRID-ORCS" id="22808">
    <property type="hits" value="13 hits in 1151 CRISPR screens"/>
</dbReference>
<dbReference type="CD-CODE" id="FB4E32DD">
    <property type="entry name" value="Presynaptic clusters and postsynaptic densities"/>
</dbReference>
<dbReference type="ChiTaRS" id="MRAS">
    <property type="organism name" value="human"/>
</dbReference>
<dbReference type="GeneWiki" id="MRAS"/>
<dbReference type="GenomeRNAi" id="22808"/>
<dbReference type="Pharos" id="O14807">
    <property type="development level" value="Tbio"/>
</dbReference>
<dbReference type="PRO" id="PR:O14807"/>
<dbReference type="Proteomes" id="UP000005640">
    <property type="component" value="Chromosome 3"/>
</dbReference>
<dbReference type="RNAct" id="O14807">
    <property type="molecule type" value="protein"/>
</dbReference>
<dbReference type="Bgee" id="ENSG00000158186">
    <property type="expression patterns" value="Expressed in lateral globus pallidus and 181 other cell types or tissues"/>
</dbReference>
<dbReference type="ExpressionAtlas" id="O14807">
    <property type="expression patterns" value="baseline and differential"/>
</dbReference>
<dbReference type="GO" id="GO:0005886">
    <property type="term" value="C:plasma membrane"/>
    <property type="evidence" value="ECO:0000318"/>
    <property type="project" value="GO_Central"/>
</dbReference>
<dbReference type="GO" id="GO:0000164">
    <property type="term" value="C:protein phosphatase type 1 complex"/>
    <property type="evidence" value="ECO:0000314"/>
    <property type="project" value="UniProtKB"/>
</dbReference>
<dbReference type="GO" id="GO:0003925">
    <property type="term" value="F:G protein activity"/>
    <property type="evidence" value="ECO:0007669"/>
    <property type="project" value="UniProtKB-EC"/>
</dbReference>
<dbReference type="GO" id="GO:0019003">
    <property type="term" value="F:GDP binding"/>
    <property type="evidence" value="ECO:0000318"/>
    <property type="project" value="GO_Central"/>
</dbReference>
<dbReference type="GO" id="GO:0005525">
    <property type="term" value="F:GTP binding"/>
    <property type="evidence" value="ECO:0000318"/>
    <property type="project" value="GO_Central"/>
</dbReference>
<dbReference type="GO" id="GO:0030742">
    <property type="term" value="F:GTP-dependent protein binding"/>
    <property type="evidence" value="ECO:0000353"/>
    <property type="project" value="UniProtKB"/>
</dbReference>
<dbReference type="GO" id="GO:0003924">
    <property type="term" value="F:GTPase activity"/>
    <property type="evidence" value="ECO:0000315"/>
    <property type="project" value="UniProtKB"/>
</dbReference>
<dbReference type="GO" id="GO:0030036">
    <property type="term" value="P:actin cytoskeleton organization"/>
    <property type="evidence" value="ECO:0000304"/>
    <property type="project" value="ProtInc"/>
</dbReference>
<dbReference type="GO" id="GO:1990830">
    <property type="term" value="P:cellular response to leukemia inhibitory factor"/>
    <property type="evidence" value="ECO:0007669"/>
    <property type="project" value="Ensembl"/>
</dbReference>
<dbReference type="GO" id="GO:0007265">
    <property type="term" value="P:Ras protein signal transduction"/>
    <property type="evidence" value="ECO:0000315"/>
    <property type="project" value="UniProtKB"/>
</dbReference>
<dbReference type="CDD" id="cd04145">
    <property type="entry name" value="M_R_Ras_like"/>
    <property type="match status" value="1"/>
</dbReference>
<dbReference type="FunFam" id="3.40.50.300:FF:000080">
    <property type="entry name" value="Ras-like GTPase Ras1"/>
    <property type="match status" value="1"/>
</dbReference>
<dbReference type="Gene3D" id="3.40.50.300">
    <property type="entry name" value="P-loop containing nucleotide triphosphate hydrolases"/>
    <property type="match status" value="1"/>
</dbReference>
<dbReference type="InterPro" id="IPR027417">
    <property type="entry name" value="P-loop_NTPase"/>
</dbReference>
<dbReference type="InterPro" id="IPR005225">
    <property type="entry name" value="Small_GTP-bd"/>
</dbReference>
<dbReference type="InterPro" id="IPR001806">
    <property type="entry name" value="Small_GTPase"/>
</dbReference>
<dbReference type="InterPro" id="IPR020849">
    <property type="entry name" value="Small_GTPase_Ras-type"/>
</dbReference>
<dbReference type="NCBIfam" id="TIGR00231">
    <property type="entry name" value="small_GTP"/>
    <property type="match status" value="1"/>
</dbReference>
<dbReference type="PANTHER" id="PTHR24070">
    <property type="entry name" value="RAS, DI-RAS, AND RHEB FAMILY MEMBERS OF SMALL GTPASE SUPERFAMILY"/>
    <property type="match status" value="1"/>
</dbReference>
<dbReference type="Pfam" id="PF00071">
    <property type="entry name" value="Ras"/>
    <property type="match status" value="1"/>
</dbReference>
<dbReference type="PRINTS" id="PR00449">
    <property type="entry name" value="RASTRNSFRMNG"/>
</dbReference>
<dbReference type="SMART" id="SM00175">
    <property type="entry name" value="RAB"/>
    <property type="match status" value="1"/>
</dbReference>
<dbReference type="SMART" id="SM00176">
    <property type="entry name" value="RAN"/>
    <property type="match status" value="1"/>
</dbReference>
<dbReference type="SMART" id="SM00173">
    <property type="entry name" value="RAS"/>
    <property type="match status" value="1"/>
</dbReference>
<dbReference type="SMART" id="SM00174">
    <property type="entry name" value="RHO"/>
    <property type="match status" value="1"/>
</dbReference>
<dbReference type="SUPFAM" id="SSF52540">
    <property type="entry name" value="P-loop containing nucleoside triphosphate hydrolases"/>
    <property type="match status" value="1"/>
</dbReference>
<dbReference type="PROSITE" id="PS51421">
    <property type="entry name" value="RAS"/>
    <property type="match status" value="1"/>
</dbReference>